<sequence length="307" mass="33485">MLAQRTLKSLTKAVGVGLHSGQRVELTLRPAPPDTGIVFRRVDLPQPVDIVISAQAVTDTRLASTISAGGAKVHTVEHLMSACAGLGIDNLYIDITAEEVPILDGSASSFVFLLQSAGIELQSAPKRFIRVLKPVEVREGEGATAKWARLSPYEGYKLSFEIDFDHPAVDSTGQRVEFDLSSGSYSRDIARARTFGFTKDVEMMRANGLALGGGLDNAIVMDDYKVLNSEGLRYNDEFVKHKILDAMGDLYLLGKPLLAAYSAFRSGHAMNNKLLRELLAHQDAYEVVTFADEKRAPQGFATLARAW</sequence>
<keyword id="KW-0378">Hydrolase</keyword>
<keyword id="KW-0441">Lipid A biosynthesis</keyword>
<keyword id="KW-0444">Lipid biosynthesis</keyword>
<keyword id="KW-0443">Lipid metabolism</keyword>
<keyword id="KW-0479">Metal-binding</keyword>
<keyword id="KW-1185">Reference proteome</keyword>
<keyword id="KW-0862">Zinc</keyword>
<name>LPXC_POLSJ</name>
<organism>
    <name type="scientific">Polaromonas sp. (strain JS666 / ATCC BAA-500)</name>
    <dbReference type="NCBI Taxonomy" id="296591"/>
    <lineage>
        <taxon>Bacteria</taxon>
        <taxon>Pseudomonadati</taxon>
        <taxon>Pseudomonadota</taxon>
        <taxon>Betaproteobacteria</taxon>
        <taxon>Burkholderiales</taxon>
        <taxon>Comamonadaceae</taxon>
        <taxon>Polaromonas</taxon>
    </lineage>
</organism>
<proteinExistence type="inferred from homology"/>
<feature type="chain" id="PRO_1000122806" description="UDP-3-O-acyl-N-acetylglucosamine deacetylase">
    <location>
        <begin position="1"/>
        <end position="307"/>
    </location>
</feature>
<feature type="active site" description="Proton donor" evidence="1">
    <location>
        <position position="268"/>
    </location>
</feature>
<feature type="binding site" evidence="1">
    <location>
        <position position="78"/>
    </location>
    <ligand>
        <name>Zn(2+)</name>
        <dbReference type="ChEBI" id="CHEBI:29105"/>
    </ligand>
</feature>
<feature type="binding site" evidence="1">
    <location>
        <position position="241"/>
    </location>
    <ligand>
        <name>Zn(2+)</name>
        <dbReference type="ChEBI" id="CHEBI:29105"/>
    </ligand>
</feature>
<feature type="binding site" evidence="1">
    <location>
        <position position="245"/>
    </location>
    <ligand>
        <name>Zn(2+)</name>
        <dbReference type="ChEBI" id="CHEBI:29105"/>
    </ligand>
</feature>
<gene>
    <name evidence="1" type="primary">lpxC</name>
    <name type="ordered locus">Bpro_1081</name>
</gene>
<comment type="function">
    <text evidence="1">Catalyzes the hydrolysis of UDP-3-O-myristoyl-N-acetylglucosamine to form UDP-3-O-myristoylglucosamine and acetate, the committed step in lipid A biosynthesis.</text>
</comment>
<comment type="catalytic activity">
    <reaction evidence="1">
        <text>a UDP-3-O-[(3R)-3-hydroxyacyl]-N-acetyl-alpha-D-glucosamine + H2O = a UDP-3-O-[(3R)-3-hydroxyacyl]-alpha-D-glucosamine + acetate</text>
        <dbReference type="Rhea" id="RHEA:67816"/>
        <dbReference type="ChEBI" id="CHEBI:15377"/>
        <dbReference type="ChEBI" id="CHEBI:30089"/>
        <dbReference type="ChEBI" id="CHEBI:137740"/>
        <dbReference type="ChEBI" id="CHEBI:173225"/>
        <dbReference type="EC" id="3.5.1.108"/>
    </reaction>
</comment>
<comment type="cofactor">
    <cofactor evidence="1">
        <name>Zn(2+)</name>
        <dbReference type="ChEBI" id="CHEBI:29105"/>
    </cofactor>
</comment>
<comment type="pathway">
    <text evidence="1">Glycolipid biosynthesis; lipid IV(A) biosynthesis; lipid IV(A) from (3R)-3-hydroxytetradecanoyl-[acyl-carrier-protein] and UDP-N-acetyl-alpha-D-glucosamine: step 2/6.</text>
</comment>
<comment type="similarity">
    <text evidence="1">Belongs to the LpxC family.</text>
</comment>
<reference key="1">
    <citation type="journal article" date="2008" name="Appl. Environ. Microbiol.">
        <title>The genome of Polaromonas sp. strain JS666: insights into the evolution of a hydrocarbon- and xenobiotic-degrading bacterium, and features of relevance to biotechnology.</title>
        <authorList>
            <person name="Mattes T.E."/>
            <person name="Alexander A.K."/>
            <person name="Richardson P.M."/>
            <person name="Munk A.C."/>
            <person name="Han C.S."/>
            <person name="Stothard P."/>
            <person name="Coleman N.V."/>
        </authorList>
    </citation>
    <scope>NUCLEOTIDE SEQUENCE [LARGE SCALE GENOMIC DNA]</scope>
    <source>
        <strain>JS666 / ATCC BAA-500</strain>
    </source>
</reference>
<dbReference type="EC" id="3.5.1.108" evidence="1"/>
<dbReference type="EMBL" id="CP000316">
    <property type="protein sequence ID" value="ABE43033.1"/>
    <property type="molecule type" value="Genomic_DNA"/>
</dbReference>
<dbReference type="RefSeq" id="WP_011482035.1">
    <property type="nucleotide sequence ID" value="NC_007948.1"/>
</dbReference>
<dbReference type="SMR" id="Q12EK9"/>
<dbReference type="STRING" id="296591.Bpro_1081"/>
<dbReference type="KEGG" id="pol:Bpro_1081"/>
<dbReference type="eggNOG" id="COG0774">
    <property type="taxonomic scope" value="Bacteria"/>
</dbReference>
<dbReference type="HOGENOM" id="CLU_046528_1_0_4"/>
<dbReference type="OrthoDB" id="9802746at2"/>
<dbReference type="UniPathway" id="UPA00359">
    <property type="reaction ID" value="UER00478"/>
</dbReference>
<dbReference type="Proteomes" id="UP000001983">
    <property type="component" value="Chromosome"/>
</dbReference>
<dbReference type="GO" id="GO:0016020">
    <property type="term" value="C:membrane"/>
    <property type="evidence" value="ECO:0007669"/>
    <property type="project" value="GOC"/>
</dbReference>
<dbReference type="GO" id="GO:0046872">
    <property type="term" value="F:metal ion binding"/>
    <property type="evidence" value="ECO:0007669"/>
    <property type="project" value="UniProtKB-KW"/>
</dbReference>
<dbReference type="GO" id="GO:0103117">
    <property type="term" value="F:UDP-3-O-acyl-N-acetylglucosamine deacetylase activity"/>
    <property type="evidence" value="ECO:0007669"/>
    <property type="project" value="UniProtKB-UniRule"/>
</dbReference>
<dbReference type="GO" id="GO:0009245">
    <property type="term" value="P:lipid A biosynthetic process"/>
    <property type="evidence" value="ECO:0007669"/>
    <property type="project" value="UniProtKB-UniRule"/>
</dbReference>
<dbReference type="Gene3D" id="3.30.230.20">
    <property type="entry name" value="lpxc deacetylase, domain 1"/>
    <property type="match status" value="1"/>
</dbReference>
<dbReference type="Gene3D" id="3.30.1700.10">
    <property type="entry name" value="lpxc deacetylase, domain 2"/>
    <property type="match status" value="1"/>
</dbReference>
<dbReference type="HAMAP" id="MF_00388">
    <property type="entry name" value="LpxC"/>
    <property type="match status" value="1"/>
</dbReference>
<dbReference type="InterPro" id="IPR020568">
    <property type="entry name" value="Ribosomal_Su5_D2-typ_SF"/>
</dbReference>
<dbReference type="InterPro" id="IPR004463">
    <property type="entry name" value="UDP-acyl_GlcNac_deAcase"/>
</dbReference>
<dbReference type="InterPro" id="IPR011334">
    <property type="entry name" value="UDP-acyl_GlcNac_deAcase_C"/>
</dbReference>
<dbReference type="InterPro" id="IPR015870">
    <property type="entry name" value="UDP-acyl_N-AcGlcN_deAcase_N"/>
</dbReference>
<dbReference type="NCBIfam" id="TIGR00325">
    <property type="entry name" value="lpxC"/>
    <property type="match status" value="1"/>
</dbReference>
<dbReference type="PANTHER" id="PTHR33694">
    <property type="entry name" value="UDP-3-O-ACYL-N-ACETYLGLUCOSAMINE DEACETYLASE 1, MITOCHONDRIAL-RELATED"/>
    <property type="match status" value="1"/>
</dbReference>
<dbReference type="PANTHER" id="PTHR33694:SF1">
    <property type="entry name" value="UDP-3-O-ACYL-N-ACETYLGLUCOSAMINE DEACETYLASE 1, MITOCHONDRIAL-RELATED"/>
    <property type="match status" value="1"/>
</dbReference>
<dbReference type="Pfam" id="PF03331">
    <property type="entry name" value="LpxC"/>
    <property type="match status" value="1"/>
</dbReference>
<dbReference type="SUPFAM" id="SSF54211">
    <property type="entry name" value="Ribosomal protein S5 domain 2-like"/>
    <property type="match status" value="2"/>
</dbReference>
<accession>Q12EK9</accession>
<protein>
    <recommendedName>
        <fullName evidence="1">UDP-3-O-acyl-N-acetylglucosamine deacetylase</fullName>
        <shortName evidence="1">UDP-3-O-acyl-GlcNAc deacetylase</shortName>
        <ecNumber evidence="1">3.5.1.108</ecNumber>
    </recommendedName>
    <alternativeName>
        <fullName evidence="1">UDP-3-O-[R-3-hydroxymyristoyl]-N-acetylglucosamine deacetylase</fullName>
    </alternativeName>
</protein>
<evidence type="ECO:0000255" key="1">
    <source>
        <dbReference type="HAMAP-Rule" id="MF_00388"/>
    </source>
</evidence>